<name>PYR1_ARATH</name>
<proteinExistence type="evidence at protein level"/>
<reference key="1">
    <citation type="journal article" date="1999" name="Nature">
        <title>Sequence and analysis of chromosome 4 of the plant Arabidopsis thaliana.</title>
        <authorList>
            <person name="Mayer K.F.X."/>
            <person name="Schueller C."/>
            <person name="Wambutt R."/>
            <person name="Murphy G."/>
            <person name="Volckaert G."/>
            <person name="Pohl T."/>
            <person name="Duesterhoeft A."/>
            <person name="Stiekema W."/>
            <person name="Entian K.-D."/>
            <person name="Terryn N."/>
            <person name="Harris B."/>
            <person name="Ansorge W."/>
            <person name="Brandt P."/>
            <person name="Grivell L.A."/>
            <person name="Rieger M."/>
            <person name="Weichselgartner M."/>
            <person name="de Simone V."/>
            <person name="Obermaier B."/>
            <person name="Mache R."/>
            <person name="Mueller M."/>
            <person name="Kreis M."/>
            <person name="Delseny M."/>
            <person name="Puigdomenech P."/>
            <person name="Watson M."/>
            <person name="Schmidtheini T."/>
            <person name="Reichert B."/>
            <person name="Portetelle D."/>
            <person name="Perez-Alonso M."/>
            <person name="Boutry M."/>
            <person name="Bancroft I."/>
            <person name="Vos P."/>
            <person name="Hoheisel J."/>
            <person name="Zimmermann W."/>
            <person name="Wedler H."/>
            <person name="Ridley P."/>
            <person name="Langham S.-A."/>
            <person name="McCullagh B."/>
            <person name="Bilham L."/>
            <person name="Robben J."/>
            <person name="van der Schueren J."/>
            <person name="Grymonprez B."/>
            <person name="Chuang Y.-J."/>
            <person name="Vandenbussche F."/>
            <person name="Braeken M."/>
            <person name="Weltjens I."/>
            <person name="Voet M."/>
            <person name="Bastiaens I."/>
            <person name="Aert R."/>
            <person name="Defoor E."/>
            <person name="Weitzenegger T."/>
            <person name="Bothe G."/>
            <person name="Ramsperger U."/>
            <person name="Hilbert H."/>
            <person name="Braun M."/>
            <person name="Holzer E."/>
            <person name="Brandt A."/>
            <person name="Peters S."/>
            <person name="van Staveren M."/>
            <person name="Dirkse W."/>
            <person name="Mooijman P."/>
            <person name="Klein Lankhorst R."/>
            <person name="Rose M."/>
            <person name="Hauf J."/>
            <person name="Koetter P."/>
            <person name="Berneiser S."/>
            <person name="Hempel S."/>
            <person name="Feldpausch M."/>
            <person name="Lamberth S."/>
            <person name="Van den Daele H."/>
            <person name="De Keyser A."/>
            <person name="Buysshaert C."/>
            <person name="Gielen J."/>
            <person name="Villarroel R."/>
            <person name="De Clercq R."/>
            <person name="van Montagu M."/>
            <person name="Rogers J."/>
            <person name="Cronin A."/>
            <person name="Quail M.A."/>
            <person name="Bray-Allen S."/>
            <person name="Clark L."/>
            <person name="Doggett J."/>
            <person name="Hall S."/>
            <person name="Kay M."/>
            <person name="Lennard N."/>
            <person name="McLay K."/>
            <person name="Mayes R."/>
            <person name="Pettett A."/>
            <person name="Rajandream M.A."/>
            <person name="Lyne M."/>
            <person name="Benes V."/>
            <person name="Rechmann S."/>
            <person name="Borkova D."/>
            <person name="Bloecker H."/>
            <person name="Scharfe M."/>
            <person name="Grimm M."/>
            <person name="Loehnert T.-H."/>
            <person name="Dose S."/>
            <person name="de Haan M."/>
            <person name="Maarse A.C."/>
            <person name="Schaefer M."/>
            <person name="Mueller-Auer S."/>
            <person name="Gabel C."/>
            <person name="Fuchs M."/>
            <person name="Fartmann B."/>
            <person name="Granderath K."/>
            <person name="Dauner D."/>
            <person name="Herzl A."/>
            <person name="Neumann S."/>
            <person name="Argiriou A."/>
            <person name="Vitale D."/>
            <person name="Liguori R."/>
            <person name="Piravandi E."/>
            <person name="Massenet O."/>
            <person name="Quigley F."/>
            <person name="Clabauld G."/>
            <person name="Muendlein A."/>
            <person name="Felber R."/>
            <person name="Schnabl S."/>
            <person name="Hiller R."/>
            <person name="Schmidt W."/>
            <person name="Lecharny A."/>
            <person name="Aubourg S."/>
            <person name="Chefdor F."/>
            <person name="Cooke R."/>
            <person name="Berger C."/>
            <person name="Monfort A."/>
            <person name="Casacuberta E."/>
            <person name="Gibbons T."/>
            <person name="Weber N."/>
            <person name="Vandenbol M."/>
            <person name="Bargues M."/>
            <person name="Terol J."/>
            <person name="Torres A."/>
            <person name="Perez-Perez A."/>
            <person name="Purnelle B."/>
            <person name="Bent E."/>
            <person name="Johnson S."/>
            <person name="Tacon D."/>
            <person name="Jesse T."/>
            <person name="Heijnen L."/>
            <person name="Schwarz S."/>
            <person name="Scholler P."/>
            <person name="Heber S."/>
            <person name="Francs P."/>
            <person name="Bielke C."/>
            <person name="Frishman D."/>
            <person name="Haase D."/>
            <person name="Lemcke K."/>
            <person name="Mewes H.-W."/>
            <person name="Stocker S."/>
            <person name="Zaccaria P."/>
            <person name="Bevan M."/>
            <person name="Wilson R.K."/>
            <person name="de la Bastide M."/>
            <person name="Habermann K."/>
            <person name="Parnell L."/>
            <person name="Dedhia N."/>
            <person name="Gnoj L."/>
            <person name="Schutz K."/>
            <person name="Huang E."/>
            <person name="Spiegel L."/>
            <person name="Sekhon M."/>
            <person name="Murray J."/>
            <person name="Sheet P."/>
            <person name="Cordes M."/>
            <person name="Abu-Threideh J."/>
            <person name="Stoneking T."/>
            <person name="Kalicki J."/>
            <person name="Graves T."/>
            <person name="Harmon G."/>
            <person name="Edwards J."/>
            <person name="Latreille P."/>
            <person name="Courtney L."/>
            <person name="Cloud J."/>
            <person name="Abbott A."/>
            <person name="Scott K."/>
            <person name="Johnson D."/>
            <person name="Minx P."/>
            <person name="Bentley D."/>
            <person name="Fulton B."/>
            <person name="Miller N."/>
            <person name="Greco T."/>
            <person name="Kemp K."/>
            <person name="Kramer J."/>
            <person name="Fulton L."/>
            <person name="Mardis E."/>
            <person name="Dante M."/>
            <person name="Pepin K."/>
            <person name="Hillier L.W."/>
            <person name="Nelson J."/>
            <person name="Spieth J."/>
            <person name="Ryan E."/>
            <person name="Andrews S."/>
            <person name="Geisel C."/>
            <person name="Layman D."/>
            <person name="Du H."/>
            <person name="Ali J."/>
            <person name="Berghoff A."/>
            <person name="Jones K."/>
            <person name="Drone K."/>
            <person name="Cotton M."/>
            <person name="Joshu C."/>
            <person name="Antonoiu B."/>
            <person name="Zidanic M."/>
            <person name="Strong C."/>
            <person name="Sun H."/>
            <person name="Lamar B."/>
            <person name="Yordan C."/>
            <person name="Ma P."/>
            <person name="Zhong J."/>
            <person name="Preston R."/>
            <person name="Vil D."/>
            <person name="Shekher M."/>
            <person name="Matero A."/>
            <person name="Shah R."/>
            <person name="Swaby I.K."/>
            <person name="O'Shaughnessy A."/>
            <person name="Rodriguez M."/>
            <person name="Hoffman J."/>
            <person name="Till S."/>
            <person name="Granat S."/>
            <person name="Shohdy N."/>
            <person name="Hasegawa A."/>
            <person name="Hameed A."/>
            <person name="Lodhi M."/>
            <person name="Johnson A."/>
            <person name="Chen E."/>
            <person name="Marra M.A."/>
            <person name="Martienssen R."/>
            <person name="McCombie W.R."/>
        </authorList>
    </citation>
    <scope>NUCLEOTIDE SEQUENCE [LARGE SCALE GENOMIC DNA]</scope>
    <source>
        <strain>cv. Columbia</strain>
    </source>
</reference>
<reference key="2">
    <citation type="journal article" date="2017" name="Plant J.">
        <title>Araport11: a complete reannotation of the Arabidopsis thaliana reference genome.</title>
        <authorList>
            <person name="Cheng C.Y."/>
            <person name="Krishnakumar V."/>
            <person name="Chan A.P."/>
            <person name="Thibaud-Nissen F."/>
            <person name="Schobel S."/>
            <person name="Town C.D."/>
        </authorList>
    </citation>
    <scope>GENOME REANNOTATION</scope>
    <source>
        <strain>cv. Columbia</strain>
    </source>
</reference>
<reference key="3">
    <citation type="journal article" date="2003" name="Science">
        <title>Empirical analysis of transcriptional activity in the Arabidopsis genome.</title>
        <authorList>
            <person name="Yamada K."/>
            <person name="Lim J."/>
            <person name="Dale J.M."/>
            <person name="Chen H."/>
            <person name="Shinn P."/>
            <person name="Palm C.J."/>
            <person name="Southwick A.M."/>
            <person name="Wu H.C."/>
            <person name="Kim C.J."/>
            <person name="Nguyen M."/>
            <person name="Pham P.K."/>
            <person name="Cheuk R.F."/>
            <person name="Karlin-Newmann G."/>
            <person name="Liu S.X."/>
            <person name="Lam B."/>
            <person name="Sakano H."/>
            <person name="Wu T."/>
            <person name="Yu G."/>
            <person name="Miranda M."/>
            <person name="Quach H.L."/>
            <person name="Tripp M."/>
            <person name="Chang C.H."/>
            <person name="Lee J.M."/>
            <person name="Toriumi M.J."/>
            <person name="Chan M.M."/>
            <person name="Tang C.C."/>
            <person name="Onodera C.S."/>
            <person name="Deng J.M."/>
            <person name="Akiyama K."/>
            <person name="Ansari Y."/>
            <person name="Arakawa T."/>
            <person name="Banh J."/>
            <person name="Banno F."/>
            <person name="Bowser L."/>
            <person name="Brooks S.Y."/>
            <person name="Carninci P."/>
            <person name="Chao Q."/>
            <person name="Choy N."/>
            <person name="Enju A."/>
            <person name="Goldsmith A.D."/>
            <person name="Gurjal M."/>
            <person name="Hansen N.F."/>
            <person name="Hayashizaki Y."/>
            <person name="Johnson-Hopson C."/>
            <person name="Hsuan V.W."/>
            <person name="Iida K."/>
            <person name="Karnes M."/>
            <person name="Khan S."/>
            <person name="Koesema E."/>
            <person name="Ishida J."/>
            <person name="Jiang P.X."/>
            <person name="Jones T."/>
            <person name="Kawai J."/>
            <person name="Kamiya A."/>
            <person name="Meyers C."/>
            <person name="Nakajima M."/>
            <person name="Narusaka M."/>
            <person name="Seki M."/>
            <person name="Sakurai T."/>
            <person name="Satou M."/>
            <person name="Tamse R."/>
            <person name="Vaysberg M."/>
            <person name="Wallender E.K."/>
            <person name="Wong C."/>
            <person name="Yamamura Y."/>
            <person name="Yuan S."/>
            <person name="Shinozaki K."/>
            <person name="Davis R.W."/>
            <person name="Theologis A."/>
            <person name="Ecker J.R."/>
        </authorList>
    </citation>
    <scope>NUCLEOTIDE SEQUENCE [LARGE SCALE MRNA]</scope>
    <source>
        <strain>cv. Columbia</strain>
    </source>
</reference>
<reference key="4">
    <citation type="journal article" date="2009" name="Nature">
        <title>A gate-latch-lock mechanism for hormone signalling by abscisic acid receptors.</title>
        <authorList>
            <person name="Melcher K."/>
            <person name="Ng L.-M."/>
            <person name="Zhou X.E."/>
            <person name="Soon F.-F."/>
            <person name="Xu Y."/>
            <person name="Suino-Powell K.M."/>
            <person name="Park S.-Y."/>
            <person name="Weiner J.J."/>
            <person name="Fujii H."/>
            <person name="Chinnusamy V."/>
            <person name="Kovach A."/>
            <person name="Li J."/>
            <person name="Wang Y."/>
            <person name="Li J."/>
            <person name="Peterson F.C."/>
            <person name="Jensen D.R."/>
            <person name="Yong E.-L."/>
            <person name="Volkman B.F."/>
            <person name="Cutler S.R."/>
            <person name="Zhu J.-K."/>
            <person name="Xu H.E."/>
        </authorList>
    </citation>
    <scope>INTERACTION WITH HAB1; ABI1 AND ABI2</scope>
</reference>
<reference key="5">
    <citation type="journal article" date="2009" name="Plant J.">
        <title>Modulation of drought resistance by the abscisic acid receptor PYL5 through inhibition of clade A PP2Cs.</title>
        <authorList>
            <person name="Santiago J."/>
            <person name="Rodrigues A."/>
            <person name="Saez A."/>
            <person name="Rubio S."/>
            <person name="Antoni R."/>
            <person name="Dupeux F."/>
            <person name="Park S.-Y."/>
            <person name="Marquez J.A."/>
            <person name="Cutler S.R."/>
            <person name="Rodriguez P.L."/>
        </authorList>
    </citation>
    <scope>FUNCTION</scope>
</reference>
<reference key="6">
    <citation type="journal article" date="2010" name="Plant J.">
        <title>PYR/PYL/RCAR family members are major in-vivo ABI1 protein phosphatase 2C-interacting proteins in Arabidopsis.</title>
        <authorList>
            <person name="Nishimura N."/>
            <person name="Sarkeshik A."/>
            <person name="Nito K."/>
            <person name="Park S.-Y."/>
            <person name="Wang A."/>
            <person name="Carvalho P.C."/>
            <person name="Lee S."/>
            <person name="Caddell D.F."/>
            <person name="Cutler S.R."/>
            <person name="Chory J."/>
            <person name="Yates J.R."/>
            <person name="Schroeder J.I."/>
        </authorList>
    </citation>
    <scope>INTERACTION WITH ABI1</scope>
    <scope>IDENTIFICATION BY MASS SPECTROMETRY</scope>
</reference>
<reference key="7">
    <citation type="journal article" date="2009" name="Science">
        <title>Regulators of PP2C phosphatase activity function as abscisic acid sensors.</title>
        <authorList>
            <person name="Ma Y."/>
            <person name="Szostkiewicz I."/>
            <person name="Korte A."/>
            <person name="Moes D."/>
            <person name="Yang Y."/>
            <person name="Christmann A."/>
            <person name="Grill E."/>
        </authorList>
    </citation>
    <scope>GENE FAMILY</scope>
</reference>
<reference key="8">
    <citation type="journal article" date="2009" name="Science">
        <title>Abscisic acid inhibits type 2C protein phosphatases via the PYR/PYL family of START proteins.</title>
        <authorList>
            <person name="Park S.-Y."/>
            <person name="Fung P."/>
            <person name="Nishimura N."/>
            <person name="Jensen D.R."/>
            <person name="Fujii H."/>
            <person name="Zhao Y."/>
            <person name="Lumba S."/>
            <person name="Santiago J."/>
            <person name="Rodrigues A."/>
            <person name="Chow T.F."/>
            <person name="Alfred S.E."/>
            <person name="Bonetta D."/>
            <person name="Finkelstein R."/>
            <person name="Provart N.J."/>
            <person name="Desveaux D."/>
            <person name="Rodriguez P.L."/>
            <person name="McCourt P."/>
            <person name="Zhu J.-K."/>
            <person name="Schroeder J.I."/>
            <person name="Volkman B.F."/>
            <person name="Cutler S.R."/>
        </authorList>
    </citation>
    <scope>FUNCTION</scope>
    <scope>MUTAGENESIS OF PRO-88; SER-152 AND ARG-157</scope>
    <scope>INTERACTION WITH HAB1; AHG3; ABI1 AND ABI2</scope>
    <scope>GENE FAMILY</scope>
    <scope>NOMENCLATURE</scope>
</reference>
<reference key="9">
    <citation type="journal article" date="2010" name="Plant J.">
        <title>Closely related receptor complexes differ in their ABA selectivity and sensitivity.</title>
        <authorList>
            <person name="Szostkiewicz I."/>
            <person name="Richter K."/>
            <person name="Kepka M."/>
            <person name="Demmel S."/>
            <person name="Ma Y."/>
            <person name="Korte A."/>
            <person name="Assaad F.F."/>
            <person name="Christmann A."/>
            <person name="Grill E."/>
        </authorList>
    </citation>
    <scope>FUNCTION</scope>
</reference>
<reference key="10">
    <citation type="journal article" date="2011" name="Mol. Cell">
        <title>The molecular basis of ABA-independent inhibition of PP2Cs by a subclass of PYL proteins.</title>
        <authorList>
            <person name="Hao Q."/>
            <person name="Yin P."/>
            <person name="Li W."/>
            <person name="Wang L."/>
            <person name="Yan C."/>
            <person name="Lin Z."/>
            <person name="Wu J.Z."/>
            <person name="Wang J."/>
            <person name="Yan S.F."/>
            <person name="Yan N."/>
        </authorList>
    </citation>
    <scope>FUNCTION</scope>
    <scope>HOMODIMER</scope>
    <scope>GENE FAMILY</scope>
</reference>
<reference key="11">
    <citation type="journal article" date="2013" name="Plant Cell Physiol.">
        <title>HONSU, a protein phosphatase 2C, regulates seed dormancy by inhibiting ABA signaling in Arabidopsis.</title>
        <authorList>
            <person name="Kim W."/>
            <person name="Lee Y."/>
            <person name="Park J."/>
            <person name="Lee N."/>
            <person name="Choi G."/>
        </authorList>
    </citation>
    <scope>INTERACTION WITH AIP1</scope>
</reference>
<reference key="12">
    <citation type="journal article" date="2013" name="PLoS ONE">
        <title>Structural insights into the abscisic acid stereospecificity by the ABA receptors PYR/PYL/RCAR.</title>
        <authorList>
            <person name="Zhang X."/>
            <person name="Jiang L."/>
            <person name="Wang G."/>
            <person name="Yu L."/>
            <person name="Zhang Q."/>
            <person name="Xin Q."/>
            <person name="Wu W."/>
            <person name="Gong Z."/>
            <person name="Chen Z."/>
        </authorList>
    </citation>
    <scope>FUNCTION</scope>
    <scope>GENE FAMILY</scope>
</reference>
<reference key="13">
    <citation type="journal article" date="2014" name="Plant Cell">
        <title>C2-domain abscisic acid-related proteins mediate the interaction of PYR/PYL/RCAR abscisic acid receptors with the plasma membrane and regulate abscisic acid sensitivity in Arabidopsis.</title>
        <authorList>
            <person name="Rodriguez L."/>
            <person name="Gonzalez-Guzman M."/>
            <person name="Diaz M."/>
            <person name="Rodrigues A."/>
            <person name="Izquierdo-Garcia A.C."/>
            <person name="Peirats-Llobet M."/>
            <person name="Fernandez M.A."/>
            <person name="Antoni R."/>
            <person name="Fernandez D."/>
            <person name="Marquez J.A."/>
            <person name="Mulet J.M."/>
            <person name="Albert A."/>
            <person name="Rodriguez P.L."/>
        </authorList>
    </citation>
    <scope>INTERACTION WITH CAR1 AND CAR4</scope>
    <scope>SUBCELLULAR LOCATION</scope>
</reference>
<reference key="14">
    <citation type="journal article" date="2014" name="Plant J.">
        <title>The single-subunit RING-type E3 ubiquitin ligase RSL1 targets PYL4 and PYR1 ABA receptors in plasma membrane to modulate abscisic acid signaling.</title>
        <authorList>
            <person name="Bueso E."/>
            <person name="Rodriguez L."/>
            <person name="Lorenzo-Orts L."/>
            <person name="Gonzalez-Guzman M."/>
            <person name="Sayas E."/>
            <person name="Munoz-Bertomeu J."/>
            <person name="Ibanez C."/>
            <person name="Serrano R."/>
            <person name="Rodriguez P.L."/>
        </authorList>
    </citation>
    <scope>INTERACTION WITH RSL1</scope>
    <scope>SUBCELLULAR LOCATION</scope>
    <scope>PTM</scope>
    <source>
        <strain>cv. Columbia</strain>
    </source>
</reference>
<reference key="15">
    <citation type="journal article" date="2016" name="Plant Cell">
        <title>FYVE1/FREE1 interacts with the PYL4 ABA receptor and mediates its delivery to the vacuolar degradation pathway.</title>
        <authorList>
            <person name="Belda-Palazon B."/>
            <person name="Rodriguez L."/>
            <person name="Fernandez M.A."/>
            <person name="Castillo M.-C."/>
            <person name="Anderson E.M."/>
            <person name="Gao C."/>
            <person name="Gonzalez-Guzman M."/>
            <person name="Peirats-Llobet M."/>
            <person name="Zhao Q."/>
            <person name="De Winne N."/>
            <person name="Gevaert K."/>
            <person name="De Jaeger G."/>
            <person name="Jiang L."/>
            <person name="Leon J."/>
            <person name="Mullen R.T."/>
            <person name="Rodriguez P.L."/>
        </authorList>
    </citation>
    <scope>INTERACTION WITH FREE1</scope>
    <scope>SUBCELLULAR LOCATION</scope>
    <source>
        <strain>cv. Columbia</strain>
    </source>
</reference>
<reference key="16">
    <citation type="journal article" date="2016" name="Proc. Natl. Acad. Sci. U.S.A.">
        <title>Calcium-dependent oligomerization of CAR proteins at cell membrane modulates ABA signaling.</title>
        <authorList>
            <person name="Diaz M."/>
            <person name="Sanchez-Barrena M.J."/>
            <person name="Gonzalez-Rubio J.M."/>
            <person name="Rodriguez L."/>
            <person name="Fernandez D."/>
            <person name="Antoni R."/>
            <person name="Yunta C."/>
            <person name="Belda-Palazon B."/>
            <person name="Gonzalez-Guzman M."/>
            <person name="Peirats-Llobet M."/>
            <person name="Menendez M."/>
            <person name="Boskovic J."/>
            <person name="Marquez J.A."/>
            <person name="Rodriguez P.L."/>
            <person name="Albert A."/>
        </authorList>
    </citation>
    <scope>INTERACTION WITH CAR4</scope>
    <source>
        <strain>cv. Columbia</strain>
    </source>
</reference>
<reference key="17">
    <citation type="journal article" date="2018" name="Int. J. Mol. Sci.">
        <title>The expression of CARK1 or RCAR11 driven by synthetic promoters increases drought tolerance in Arabidopsis thaliana.</title>
        <authorList>
            <person name="Ge H."/>
            <person name="Li X."/>
            <person name="Chen S."/>
            <person name="Zhang M."/>
            <person name="Liu Z."/>
            <person name="Wang J."/>
            <person name="Li X."/>
            <person name="Yang Y."/>
        </authorList>
    </citation>
    <scope>FUNCTION</scope>
    <source>
        <strain>cv. Columbia</strain>
    </source>
</reference>
<reference key="18">
    <citation type="journal article" date="2018" name="Cell Discov.">
        <title>CARK1 mediates ABA signaling by phosphorylation of ABA receptors.</title>
        <authorList>
            <person name="Zhang L."/>
            <person name="Li X."/>
            <person name="Li D."/>
            <person name="Sun Y."/>
            <person name="Li Y."/>
            <person name="Luo Q."/>
            <person name="Liu Z."/>
            <person name="Wang J."/>
            <person name="Li X."/>
            <person name="Zhang H."/>
            <person name="Lou Z."/>
            <person name="Yang Y."/>
        </authorList>
    </citation>
    <scope>MUTAGENESIS OF THR-78</scope>
    <scope>INTERACTION WITH CARK1</scope>
    <scope>PHOSPHORYLATION AT THR-78</scope>
    <scope>PTM</scope>
    <scope>SUBCELLULAR LOCATION</scope>
</reference>
<reference key="19">
    <citation type="journal article" date="2009" name="Nature">
        <title>The abscisic acid receptor PYR1 in complex with abscisic acid.</title>
        <authorList>
            <person name="Santiago J."/>
            <person name="Dupeux F."/>
            <person name="Round A."/>
            <person name="Antoni R."/>
            <person name="Park S.-Y."/>
            <person name="Jamin M."/>
            <person name="Cutler S.R."/>
            <person name="Rodriguez P.L."/>
            <person name="Marquez J.A."/>
        </authorList>
    </citation>
    <scope>X-RAY CRYSTALLOGRAPHY (2.0 ANGSTROMS) OF 3-191 IN COMPLEX WITH ABSCISIC ACID</scope>
    <scope>SUBUNIT</scope>
    <scope>DIMERIZATION</scope>
</reference>
<reference key="20">
    <citation type="journal article" date="2009" name="Science">
        <title>Structural mechanism of abscisic acid binding and signaling by dimeric PYR1.</title>
        <authorList>
            <person name="Nishimura N."/>
            <person name="Hitomi K."/>
            <person name="Arvai A.S."/>
            <person name="Rambo R.P."/>
            <person name="Hitomi C."/>
            <person name="Cutler S.R."/>
            <person name="Schroeder J.I."/>
            <person name="Getzoff E.D."/>
        </authorList>
    </citation>
    <scope>X-RAY CRYSTALLOGRAPHY (1.7 ANGSTROMS) IN COMPLEX WITH ABSCISIC ACID</scope>
    <scope>MUTAGENESIS OF LYS-59 AND ARG-116</scope>
    <scope>INTERACTION WITH ABI1</scope>
    <scope>SUBUNIT</scope>
    <scope>DIMERIZATION</scope>
</reference>
<gene>
    <name evidence="20 22" type="primary">PYR1</name>
    <name evidence="21" type="synonym">ABIP6</name>
    <name evidence="19" type="synonym">RCAR11</name>
    <name evidence="24" type="ordered locus">At4g17870</name>
    <name evidence="25" type="ORF">T6K21.50</name>
</gene>
<feature type="chain" id="PRO_0000391735" description="Abscisic acid receptor PYR1">
    <location>
        <begin position="1"/>
        <end position="191"/>
    </location>
</feature>
<feature type="region of interest" description="START-like">
    <location>
        <begin position="23"/>
        <end position="176"/>
    </location>
</feature>
<feature type="short sequence motif" description="Gate loop" evidence="2">
    <location>
        <begin position="85"/>
        <end position="89"/>
    </location>
</feature>
<feature type="short sequence motif" description="Latch loop" evidence="2">
    <location>
        <begin position="115"/>
        <end position="117"/>
    </location>
</feature>
<feature type="binding site" evidence="9 10">
    <location>
        <position position="59"/>
    </location>
    <ligand>
        <name>abscisate</name>
        <dbReference type="ChEBI" id="CHEBI:62432"/>
    </ligand>
</feature>
<feature type="binding site" evidence="9 10">
    <location>
        <begin position="89"/>
        <end position="94"/>
    </location>
    <ligand>
        <name>abscisate</name>
        <dbReference type="ChEBI" id="CHEBI:62432"/>
    </ligand>
</feature>
<feature type="binding site" evidence="9 10">
    <location>
        <begin position="116"/>
        <end position="122"/>
    </location>
    <ligand>
        <name>abscisate</name>
        <dbReference type="ChEBI" id="CHEBI:62432"/>
    </ligand>
</feature>
<feature type="binding site" evidence="9 10">
    <location>
        <position position="141"/>
    </location>
    <ligand>
        <name>abscisate</name>
        <dbReference type="ChEBI" id="CHEBI:62432"/>
    </ligand>
</feature>
<feature type="site" description="Involved in interactions with PP2Cs" evidence="4">
    <location>
        <position position="88"/>
    </location>
</feature>
<feature type="site" description="Involved in interactions with PP2Cs" evidence="4">
    <location>
        <position position="152"/>
    </location>
</feature>
<feature type="modified residue" description="Phosphothreonine; by CARK1" evidence="17">
    <location>
        <position position="78"/>
    </location>
</feature>
<feature type="mutagenesis site" description="Impaired ABA-mediated binding to PP2Cs." evidence="10">
    <original>K</original>
    <variation>Q</variation>
    <location>
        <position position="59"/>
    </location>
</feature>
<feature type="mutagenesis site" description="Reduced CARK1-mediated phosphorylation." evidence="17">
    <original>T</original>
    <variation>A</variation>
    <location>
        <position position="78"/>
    </location>
</feature>
<feature type="mutagenesis site" description="Insensitivity to pyrabactin and impaired ABA-mediated binding to PP2Cs." evidence="4">
    <original>P</original>
    <variation>S</variation>
    <location>
        <position position="88"/>
    </location>
</feature>
<feature type="mutagenesis site" description="Impaired ABA-mediated binding to PP2Cs." evidence="10">
    <original>R</original>
    <variation>G</variation>
    <location>
        <position position="116"/>
    </location>
</feature>
<feature type="mutagenesis site" description="Insensitivity to pyrabactin and impaired ABA-mediated binding to PP2Cs." evidence="4">
    <original>S</original>
    <variation>L</variation>
    <location>
        <position position="152"/>
    </location>
</feature>
<feature type="mutagenesis site" description="Reduced sensitivity to pyrabactin." evidence="4">
    <original>R</original>
    <variation>H</variation>
    <location>
        <position position="157"/>
    </location>
</feature>
<feature type="strand" evidence="27">
    <location>
        <begin position="3"/>
        <end position="5"/>
    </location>
</feature>
<feature type="helix" evidence="28">
    <location>
        <begin position="7"/>
        <end position="12"/>
    </location>
</feature>
<feature type="helix" evidence="28">
    <location>
        <begin position="14"/>
        <end position="20"/>
    </location>
</feature>
<feature type="strand" evidence="28">
    <location>
        <begin position="29"/>
        <end position="40"/>
    </location>
</feature>
<feature type="helix" evidence="28">
    <location>
        <begin position="42"/>
        <end position="49"/>
    </location>
</feature>
<feature type="helix" evidence="28">
    <location>
        <begin position="55"/>
        <end position="57"/>
    </location>
</feature>
<feature type="strand" evidence="28">
    <location>
        <begin position="60"/>
        <end position="66"/>
    </location>
</feature>
<feature type="strand" evidence="28">
    <location>
        <begin position="78"/>
        <end position="83"/>
    </location>
</feature>
<feature type="strand" evidence="28">
    <location>
        <begin position="87"/>
        <end position="100"/>
    </location>
</feature>
<feature type="turn" evidence="28">
    <location>
        <begin position="101"/>
        <end position="104"/>
    </location>
</feature>
<feature type="strand" evidence="28">
    <location>
        <begin position="105"/>
        <end position="116"/>
    </location>
</feature>
<feature type="strand" evidence="28">
    <location>
        <begin position="121"/>
        <end position="131"/>
    </location>
</feature>
<feature type="strand" evidence="28">
    <location>
        <begin position="134"/>
        <end position="146"/>
    </location>
</feature>
<feature type="strand" evidence="26">
    <location>
        <begin position="149"/>
        <end position="154"/>
    </location>
</feature>
<feature type="helix" evidence="28">
    <location>
        <begin position="158"/>
        <end position="179"/>
    </location>
</feature>
<feature type="turn" evidence="26">
    <location>
        <begin position="180"/>
        <end position="182"/>
    </location>
</feature>
<sequence length="191" mass="21575">MPSELTPEERSELKNSIAEFHTYQLDPGSCSSLHAQRIHAPPELVWSIVRRFDKPQTYKHFIKSCSVEQNFEMRVGCTRDVIVISGLPANTSTERLDILDDERRVTGFSIIGGEHRLTNYKSVTTVHRFEKENRIWTVVLESYVVDMPEGNSEDDTRMFADTVVKLNLQKLATVAEAMARNSGDGSGSQVT</sequence>
<comment type="function">
    <text evidence="4 5 6 11 12 18">Receptor for abscisic acid (ABA) required for ABA-mediated responses such as stomatal closure and germination inhibition. Inhibits the activity of group-A protein phosphatases type 2C (PP2Cs) when activated by ABA (PubMed:19407142, PubMed:19624469, PubMed:19769575, PubMed:21658606, PubMed:23844015). Can be activated by both (-)-ABA and (+)-ABA (PubMed:23844015). Promotes drought tolerance (PubMed:29970817).</text>
</comment>
<comment type="subunit">
    <text evidence="4 7 8 9 10 11 13 14 15 16 17">Homodimer (PubMed:19898494, PubMed:19933100, PubMed:21658606). Binds ABA on one subunit only. Interacts with HAB1, AHG3, ABI1 and ABI2 when complexed to ABA, and possibly with other PP2Cs (PubMed:19407142, PubMed:19874541, PubMed:19898420, PubMed:19898494, PubMed:19933100). Binds to CARs protein in an ABA-independent manner, both at the plasma membrane and in the nucleus (PubMed:26719420). Interacts directly with CAR1 and CAR4 (PubMed:25465408, PubMed:26719420). Interacts with CARK1 in the cytosol (PubMed:19407142, PubMed:19874541, PubMed:19898420, PubMed:19898494, PubMed:19933100, PubMed:21658606, PubMed:25465408, PubMed:26719420, PubMed:29928509). Interacts with AIP1 in an abscisic acid-dependent manner (PubMed:29928509). Interacts with FREE1 (via N-terminus) (PubMed:27495812). Interacts with the E3 ubiquitin-protein ligase RSL1 at the plasma membrane (PubMed:25330042).</text>
</comment>
<comment type="interaction">
    <interactant intactId="EBI-2349590">
        <id>O49686</id>
    </interactant>
    <interactant intactId="EBI-782526">
        <id>P49597</id>
        <label>ABI1</label>
    </interactant>
    <organismsDiffer>false</organismsDiffer>
    <experiments>12</experiments>
</comment>
<comment type="interaction">
    <interactant intactId="EBI-2349590">
        <id>O49686</id>
    </interactant>
    <interactant intactId="EBI-537680">
        <id>O04719</id>
        <label>ABI2</label>
    </interactant>
    <organismsDiffer>false</organismsDiffer>
    <experiments>3</experiments>
</comment>
<comment type="interaction">
    <interactant intactId="EBI-2349590">
        <id>O49686</id>
    </interactant>
    <interactant intactId="EBI-15803514">
        <id>O04719-1</id>
        <label>ABI2</label>
    </interactant>
    <organismsDiffer>false</organismsDiffer>
    <experiments>2</experiments>
</comment>
<comment type="interaction">
    <interactant intactId="EBI-2349590">
        <id>O49686</id>
    </interactant>
    <interactant intactId="EBI-1573499">
        <id>Q9LNW3</id>
        <label>AIP1</label>
    </interactant>
    <organismsDiffer>false</organismsDiffer>
    <experiments>3</experiments>
</comment>
<comment type="interaction">
    <interactant intactId="EBI-2349590">
        <id>O49686</id>
    </interactant>
    <interactant intactId="EBI-2309302">
        <id>Q9CAJ0</id>
        <label>HAB1</label>
    </interactant>
    <organismsDiffer>false</organismsDiffer>
    <experiments>17</experiments>
</comment>
<comment type="interaction">
    <interactant intactId="EBI-2349590">
        <id>O49686</id>
    </interactant>
    <interactant intactId="EBI-2349590">
        <id>O49686</id>
        <label>PYR1</label>
    </interactant>
    <organismsDiffer>false</organismsDiffer>
    <experiments>8</experiments>
</comment>
<comment type="interaction">
    <interactant intactId="EBI-2349590">
        <id>O49686</id>
    </interactant>
    <interactant intactId="EBI-4426178">
        <id>Q9LT89</id>
        <label>TCP19</label>
    </interactant>
    <organismsDiffer>false</organismsDiffer>
    <experiments>3</experiments>
</comment>
<comment type="subcellular location">
    <subcellularLocation>
        <location evidence="3">Cytoplasm</location>
    </subcellularLocation>
    <subcellularLocation>
        <location evidence="17">Cytoplasm</location>
        <location evidence="17">Cytosol</location>
    </subcellularLocation>
    <subcellularLocation>
        <location evidence="14">Nucleus</location>
    </subcellularLocation>
    <subcellularLocation>
        <location evidence="13 14">Cell membrane</location>
    </subcellularLocation>
    <subcellularLocation>
        <location evidence="16">Vacuole</location>
    </subcellularLocation>
    <text evidence="1 16">Localizes at the plasma membrane in the presence of a CAR protein (By similarity). Localized transiently in the vacuole when in complex with RSL1 (PubMed:27495812).</text>
</comment>
<comment type="domain">
    <text evidence="2">Upon interaction with ABA, the 'latch' and 'gate' loops change in conformation leading to a tight dimerization and the creation a surface that enables the receptor to dock into and inhibit the PP2C active site.</text>
</comment>
<comment type="PTM">
    <text evidence="13">Ubiquitynated and degraded by the proteasome upon binding to the E3 ubiquitin-protein ligase RSL1 at the plasma membrane.</text>
</comment>
<comment type="PTM">
    <text evidence="17">Phosphorylated by CARK1 especially in response to abscisic acid (ABA); this phosphorylation promotes its stability and inhibitory ability to ABI1.</text>
</comment>
<comment type="miscellaneous">
    <text>The synthetic growth inhibitor pyrabactin inhibits ABA-binding and subsequent PP2Cs inhibitor properties.</text>
</comment>
<comment type="similarity">
    <text evidence="23">Belongs to the PYR/PYL/RCAR abscisic acid intracellular receptor family.</text>
</comment>
<organism>
    <name type="scientific">Arabidopsis thaliana</name>
    <name type="common">Mouse-ear cress</name>
    <dbReference type="NCBI Taxonomy" id="3702"/>
    <lineage>
        <taxon>Eukaryota</taxon>
        <taxon>Viridiplantae</taxon>
        <taxon>Streptophyta</taxon>
        <taxon>Embryophyta</taxon>
        <taxon>Tracheophyta</taxon>
        <taxon>Spermatophyta</taxon>
        <taxon>Magnoliopsida</taxon>
        <taxon>eudicotyledons</taxon>
        <taxon>Gunneridae</taxon>
        <taxon>Pentapetalae</taxon>
        <taxon>rosids</taxon>
        <taxon>malvids</taxon>
        <taxon>Brassicales</taxon>
        <taxon>Brassicaceae</taxon>
        <taxon>Camelineae</taxon>
        <taxon>Arabidopsis</taxon>
    </lineage>
</organism>
<protein>
    <recommendedName>
        <fullName evidence="20 22">Abscisic acid receptor PYR1</fullName>
    </recommendedName>
    <alternativeName>
        <fullName evidence="21">ABI1-binding protein 6</fullName>
    </alternativeName>
    <alternativeName>
        <fullName evidence="20 22">Protein PYRABACTIN RESISTANCE 1</fullName>
    </alternativeName>
    <alternativeName>
        <fullName evidence="19">Regulatory components of ABA receptor 11</fullName>
    </alternativeName>
</protein>
<evidence type="ECO:0000250" key="1">
    <source>
        <dbReference type="UniProtKB" id="O80920"/>
    </source>
</evidence>
<evidence type="ECO:0000250" key="2">
    <source>
        <dbReference type="UniProtKB" id="Q8VZS8"/>
    </source>
</evidence>
<evidence type="ECO:0000250" key="3">
    <source>
        <dbReference type="UniProtKB" id="Q9FLB1"/>
    </source>
</evidence>
<evidence type="ECO:0000269" key="4">
    <source>
    </source>
</evidence>
<evidence type="ECO:0000269" key="5">
    <source>
    </source>
</evidence>
<evidence type="ECO:0000269" key="6">
    <source>
    </source>
</evidence>
<evidence type="ECO:0000269" key="7">
    <source>
    </source>
</evidence>
<evidence type="ECO:0000269" key="8">
    <source>
    </source>
</evidence>
<evidence type="ECO:0000269" key="9">
    <source>
    </source>
</evidence>
<evidence type="ECO:0000269" key="10">
    <source>
    </source>
</evidence>
<evidence type="ECO:0000269" key="11">
    <source>
    </source>
</evidence>
<evidence type="ECO:0000269" key="12">
    <source>
    </source>
</evidence>
<evidence type="ECO:0000269" key="13">
    <source>
    </source>
</evidence>
<evidence type="ECO:0000269" key="14">
    <source>
    </source>
</evidence>
<evidence type="ECO:0000269" key="15">
    <source>
    </source>
</evidence>
<evidence type="ECO:0000269" key="16">
    <source>
    </source>
</evidence>
<evidence type="ECO:0000269" key="17">
    <source>
    </source>
</evidence>
<evidence type="ECO:0000269" key="18">
    <source>
    </source>
</evidence>
<evidence type="ECO:0000303" key="19">
    <source>
    </source>
</evidence>
<evidence type="ECO:0000303" key="20">
    <source>
    </source>
</evidence>
<evidence type="ECO:0000303" key="21">
    <source>
    </source>
</evidence>
<evidence type="ECO:0000303" key="22">
    <source>
    </source>
</evidence>
<evidence type="ECO:0000305" key="23"/>
<evidence type="ECO:0000312" key="24">
    <source>
        <dbReference type="Araport" id="AT4G17870"/>
    </source>
</evidence>
<evidence type="ECO:0000312" key="25">
    <source>
        <dbReference type="EMBL" id="CAA17130.1"/>
    </source>
</evidence>
<evidence type="ECO:0007829" key="26">
    <source>
        <dbReference type="PDB" id="3K3K"/>
    </source>
</evidence>
<evidence type="ECO:0007829" key="27">
    <source>
        <dbReference type="PDB" id="3ZVU"/>
    </source>
</evidence>
<evidence type="ECO:0007829" key="28">
    <source>
        <dbReference type="PDB" id="5UR4"/>
    </source>
</evidence>
<accession>O49686</accession>
<dbReference type="EMBL" id="AL021889">
    <property type="protein sequence ID" value="CAA17130.1"/>
    <property type="molecule type" value="Genomic_DNA"/>
</dbReference>
<dbReference type="EMBL" id="AL161547">
    <property type="protein sequence ID" value="CAB78789.1"/>
    <property type="molecule type" value="Genomic_DNA"/>
</dbReference>
<dbReference type="EMBL" id="CP002687">
    <property type="protein sequence ID" value="AEE83959.1"/>
    <property type="molecule type" value="Genomic_DNA"/>
</dbReference>
<dbReference type="EMBL" id="AY042890">
    <property type="protein sequence ID" value="AAK68830.1"/>
    <property type="molecule type" value="mRNA"/>
</dbReference>
<dbReference type="EMBL" id="AY081526">
    <property type="protein sequence ID" value="AAM10088.1"/>
    <property type="molecule type" value="mRNA"/>
</dbReference>
<dbReference type="PIR" id="T05073">
    <property type="entry name" value="T05073"/>
</dbReference>
<dbReference type="RefSeq" id="NP_193521.1">
    <property type="nucleotide sequence ID" value="NM_117896.3"/>
</dbReference>
<dbReference type="PDB" id="3K3K">
    <property type="method" value="X-ray"/>
    <property type="resolution" value="1.70 A"/>
    <property type="chains" value="A/B=1-191"/>
</dbReference>
<dbReference type="PDB" id="3K90">
    <property type="method" value="X-ray"/>
    <property type="resolution" value="2.00 A"/>
    <property type="chains" value="A/B/C/D=1-191"/>
</dbReference>
<dbReference type="PDB" id="3NJO">
    <property type="method" value="X-ray"/>
    <property type="resolution" value="2.47 A"/>
    <property type="chains" value="A/B/C=1-191"/>
</dbReference>
<dbReference type="PDB" id="3QN1">
    <property type="method" value="X-ray"/>
    <property type="resolution" value="1.80 A"/>
    <property type="chains" value="A=3-191"/>
</dbReference>
<dbReference type="PDB" id="3WG8">
    <property type="method" value="X-ray"/>
    <property type="resolution" value="2.30 A"/>
    <property type="chains" value="A=1-191"/>
</dbReference>
<dbReference type="PDB" id="3ZVU">
    <property type="method" value="X-ray"/>
    <property type="resolution" value="2.10 A"/>
    <property type="chains" value="A=3-191"/>
</dbReference>
<dbReference type="PDB" id="4WVO">
    <property type="method" value="X-ray"/>
    <property type="resolution" value="2.25 A"/>
    <property type="chains" value="A=1-181"/>
</dbReference>
<dbReference type="PDB" id="5OR2">
    <property type="method" value="X-ray"/>
    <property type="resolution" value="2.50 A"/>
    <property type="chains" value="A=3-191"/>
</dbReference>
<dbReference type="PDB" id="5OR6">
    <property type="method" value="X-ray"/>
    <property type="resolution" value="2.40 A"/>
    <property type="chains" value="A=3-191"/>
</dbReference>
<dbReference type="PDB" id="5UR4">
    <property type="method" value="X-ray"/>
    <property type="resolution" value="1.52 A"/>
    <property type="chains" value="A=1-181"/>
</dbReference>
<dbReference type="PDB" id="5UR5">
    <property type="method" value="X-ray"/>
    <property type="resolution" value="1.93 A"/>
    <property type="chains" value="A=1-181"/>
</dbReference>
<dbReference type="PDB" id="5UR6">
    <property type="method" value="X-ray"/>
    <property type="resolution" value="1.63 A"/>
    <property type="chains" value="A=1-181"/>
</dbReference>
<dbReference type="PDB" id="5YGV">
    <property type="method" value="X-ray"/>
    <property type="resolution" value="2.50 A"/>
    <property type="chains" value="A/B=1-191"/>
</dbReference>
<dbReference type="PDB" id="8EY0">
    <property type="method" value="X-ray"/>
    <property type="resolution" value="2.40 A"/>
    <property type="chains" value="A=1-181"/>
</dbReference>
<dbReference type="PDBsum" id="3K3K"/>
<dbReference type="PDBsum" id="3K90"/>
<dbReference type="PDBsum" id="3NJO"/>
<dbReference type="PDBsum" id="3QN1"/>
<dbReference type="PDBsum" id="3WG8"/>
<dbReference type="PDBsum" id="3ZVU"/>
<dbReference type="PDBsum" id="4WVO"/>
<dbReference type="PDBsum" id="5OR2"/>
<dbReference type="PDBsum" id="5OR6"/>
<dbReference type="PDBsum" id="5UR4"/>
<dbReference type="PDBsum" id="5UR5"/>
<dbReference type="PDBsum" id="5UR6"/>
<dbReference type="PDBsum" id="5YGV"/>
<dbReference type="PDBsum" id="8EY0"/>
<dbReference type="SMR" id="O49686"/>
<dbReference type="BioGRID" id="12803">
    <property type="interactions" value="14"/>
</dbReference>
<dbReference type="ComplexPortal" id="CPX-1620">
    <property type="entry name" value="PYR1 ABA receptor complex"/>
</dbReference>
<dbReference type="DIP" id="DIP-53473N"/>
<dbReference type="FunCoup" id="O49686">
    <property type="interactions" value="464"/>
</dbReference>
<dbReference type="IntAct" id="O49686">
    <property type="interactions" value="11"/>
</dbReference>
<dbReference type="MINT" id="O49686"/>
<dbReference type="STRING" id="3702.O49686"/>
<dbReference type="iPTMnet" id="O49686"/>
<dbReference type="PaxDb" id="3702-AT4G17870.1"/>
<dbReference type="ProteomicsDB" id="224811"/>
<dbReference type="EnsemblPlants" id="AT4G17870.1">
    <property type="protein sequence ID" value="AT4G17870.1"/>
    <property type="gene ID" value="AT4G17870"/>
</dbReference>
<dbReference type="GeneID" id="827510"/>
<dbReference type="Gramene" id="AT4G17870.1">
    <property type="protein sequence ID" value="AT4G17870.1"/>
    <property type="gene ID" value="AT4G17870"/>
</dbReference>
<dbReference type="KEGG" id="ath:AT4G17870"/>
<dbReference type="Araport" id="AT4G17870"/>
<dbReference type="TAIR" id="AT4G17870">
    <property type="gene designation" value="PYR1"/>
</dbReference>
<dbReference type="eggNOG" id="ENOG502QW1M">
    <property type="taxonomic scope" value="Eukaryota"/>
</dbReference>
<dbReference type="HOGENOM" id="CLU_077517_0_1_1"/>
<dbReference type="InParanoid" id="O49686"/>
<dbReference type="OMA" id="IESHHRY"/>
<dbReference type="OrthoDB" id="4436220at2759"/>
<dbReference type="PhylomeDB" id="O49686"/>
<dbReference type="EvolutionaryTrace" id="O49686"/>
<dbReference type="PRO" id="PR:O49686"/>
<dbReference type="Proteomes" id="UP000006548">
    <property type="component" value="Chromosome 4"/>
</dbReference>
<dbReference type="ExpressionAtlas" id="O49686">
    <property type="expression patterns" value="baseline and differential"/>
</dbReference>
<dbReference type="GO" id="GO:0005737">
    <property type="term" value="C:cytoplasm"/>
    <property type="evidence" value="ECO:0000250"/>
    <property type="project" value="UniProtKB"/>
</dbReference>
<dbReference type="GO" id="GO:0005829">
    <property type="term" value="C:cytosol"/>
    <property type="evidence" value="ECO:0000314"/>
    <property type="project" value="UniProtKB"/>
</dbReference>
<dbReference type="GO" id="GO:0005634">
    <property type="term" value="C:nucleus"/>
    <property type="evidence" value="ECO:0000250"/>
    <property type="project" value="UniProtKB"/>
</dbReference>
<dbReference type="GO" id="GO:0009705">
    <property type="term" value="C:plant-type vacuole membrane"/>
    <property type="evidence" value="ECO:0000314"/>
    <property type="project" value="UniProtKB"/>
</dbReference>
<dbReference type="GO" id="GO:0005886">
    <property type="term" value="C:plasma membrane"/>
    <property type="evidence" value="ECO:0000314"/>
    <property type="project" value="UniProtKB"/>
</dbReference>
<dbReference type="GO" id="GO:0062049">
    <property type="term" value="C:protein phosphatase inhibitor complex"/>
    <property type="evidence" value="ECO:0000353"/>
    <property type="project" value="ComplexPortal"/>
</dbReference>
<dbReference type="GO" id="GO:0010427">
    <property type="term" value="F:abscisic acid binding"/>
    <property type="evidence" value="ECO:0000314"/>
    <property type="project" value="TAIR"/>
</dbReference>
<dbReference type="GO" id="GO:0042802">
    <property type="term" value="F:identical protein binding"/>
    <property type="evidence" value="ECO:0000353"/>
    <property type="project" value="IntAct"/>
</dbReference>
<dbReference type="GO" id="GO:0042803">
    <property type="term" value="F:protein homodimerization activity"/>
    <property type="evidence" value="ECO:0000314"/>
    <property type="project" value="UniProtKB"/>
</dbReference>
<dbReference type="GO" id="GO:0004864">
    <property type="term" value="F:protein phosphatase inhibitor activity"/>
    <property type="evidence" value="ECO:0000314"/>
    <property type="project" value="UniProtKB"/>
</dbReference>
<dbReference type="GO" id="GO:0038023">
    <property type="term" value="F:signaling receptor activity"/>
    <property type="evidence" value="ECO:0000314"/>
    <property type="project" value="UniProtKB"/>
</dbReference>
<dbReference type="GO" id="GO:0044389">
    <property type="term" value="F:ubiquitin-like protein ligase binding"/>
    <property type="evidence" value="ECO:0000353"/>
    <property type="project" value="UniProtKB"/>
</dbReference>
<dbReference type="GO" id="GO:0009738">
    <property type="term" value="P:abscisic acid-activated signaling pathway"/>
    <property type="evidence" value="ECO:0000314"/>
    <property type="project" value="UniProtKB"/>
</dbReference>
<dbReference type="GO" id="GO:1902584">
    <property type="term" value="P:positive regulation of response to water deprivation"/>
    <property type="evidence" value="ECO:0000315"/>
    <property type="project" value="UniProtKB"/>
</dbReference>
<dbReference type="CDD" id="cd07821">
    <property type="entry name" value="PYR_PYL_RCAR_like"/>
    <property type="match status" value="1"/>
</dbReference>
<dbReference type="FunFam" id="3.30.530.20:FF:000019">
    <property type="entry name" value="Abscisic acid receptor PYR1"/>
    <property type="match status" value="1"/>
</dbReference>
<dbReference type="Gene3D" id="3.30.530.20">
    <property type="match status" value="1"/>
</dbReference>
<dbReference type="InterPro" id="IPR050279">
    <property type="entry name" value="Plant_def-hormone_signal"/>
</dbReference>
<dbReference type="InterPro" id="IPR019587">
    <property type="entry name" value="Polyketide_cyclase/dehydratase"/>
</dbReference>
<dbReference type="InterPro" id="IPR023393">
    <property type="entry name" value="START-like_dom_sf"/>
</dbReference>
<dbReference type="PANTHER" id="PTHR31213:SF6">
    <property type="entry name" value="ABSCISIC ACID RECEPTOR PYR1"/>
    <property type="match status" value="1"/>
</dbReference>
<dbReference type="PANTHER" id="PTHR31213">
    <property type="entry name" value="OS08G0374000 PROTEIN-RELATED"/>
    <property type="match status" value="1"/>
</dbReference>
<dbReference type="Pfam" id="PF10604">
    <property type="entry name" value="Polyketide_cyc2"/>
    <property type="match status" value="1"/>
</dbReference>
<dbReference type="SUPFAM" id="SSF55961">
    <property type="entry name" value="Bet v1-like"/>
    <property type="match status" value="1"/>
</dbReference>
<keyword id="KW-0002">3D-structure</keyword>
<keyword id="KW-0938">Abscisic acid signaling pathway</keyword>
<keyword id="KW-1003">Cell membrane</keyword>
<keyword id="KW-0963">Cytoplasm</keyword>
<keyword id="KW-0472">Membrane</keyword>
<keyword id="KW-0539">Nucleus</keyword>
<keyword id="KW-0597">Phosphoprotein</keyword>
<keyword id="KW-0650">Protein phosphatase inhibitor</keyword>
<keyword id="KW-0675">Receptor</keyword>
<keyword id="KW-1185">Reference proteome</keyword>
<keyword id="KW-0926">Vacuole</keyword>